<accession>Q819Q2</accession>
<gene>
    <name evidence="1" type="primary">murD</name>
    <name type="ordered locus">BC_3912</name>
</gene>
<evidence type="ECO:0000255" key="1">
    <source>
        <dbReference type="HAMAP-Rule" id="MF_00639"/>
    </source>
</evidence>
<comment type="function">
    <text evidence="1">Cell wall formation. Catalyzes the addition of glutamate to the nucleotide precursor UDP-N-acetylmuramoyl-L-alanine (UMA).</text>
</comment>
<comment type="catalytic activity">
    <reaction evidence="1">
        <text>UDP-N-acetyl-alpha-D-muramoyl-L-alanine + D-glutamate + ATP = UDP-N-acetyl-alpha-D-muramoyl-L-alanyl-D-glutamate + ADP + phosphate + H(+)</text>
        <dbReference type="Rhea" id="RHEA:16429"/>
        <dbReference type="ChEBI" id="CHEBI:15378"/>
        <dbReference type="ChEBI" id="CHEBI:29986"/>
        <dbReference type="ChEBI" id="CHEBI:30616"/>
        <dbReference type="ChEBI" id="CHEBI:43474"/>
        <dbReference type="ChEBI" id="CHEBI:83898"/>
        <dbReference type="ChEBI" id="CHEBI:83900"/>
        <dbReference type="ChEBI" id="CHEBI:456216"/>
        <dbReference type="EC" id="6.3.2.9"/>
    </reaction>
</comment>
<comment type="pathway">
    <text evidence="1">Cell wall biogenesis; peptidoglycan biosynthesis.</text>
</comment>
<comment type="subcellular location">
    <subcellularLocation>
        <location evidence="1">Cytoplasm</location>
    </subcellularLocation>
</comment>
<comment type="similarity">
    <text evidence="1">Belongs to the MurCDEF family.</text>
</comment>
<proteinExistence type="inferred from homology"/>
<organism>
    <name type="scientific">Bacillus cereus (strain ATCC 14579 / DSM 31 / CCUG 7414 / JCM 2152 / NBRC 15305 / NCIMB 9373 / NCTC 2599 / NRRL B-3711)</name>
    <dbReference type="NCBI Taxonomy" id="226900"/>
    <lineage>
        <taxon>Bacteria</taxon>
        <taxon>Bacillati</taxon>
        <taxon>Bacillota</taxon>
        <taxon>Bacilli</taxon>
        <taxon>Bacillales</taxon>
        <taxon>Bacillaceae</taxon>
        <taxon>Bacillus</taxon>
        <taxon>Bacillus cereus group</taxon>
    </lineage>
</organism>
<reference key="1">
    <citation type="journal article" date="2003" name="Nature">
        <title>Genome sequence of Bacillus cereus and comparative analysis with Bacillus anthracis.</title>
        <authorList>
            <person name="Ivanova N."/>
            <person name="Sorokin A."/>
            <person name="Anderson I."/>
            <person name="Galleron N."/>
            <person name="Candelon B."/>
            <person name="Kapatral V."/>
            <person name="Bhattacharyya A."/>
            <person name="Reznik G."/>
            <person name="Mikhailova N."/>
            <person name="Lapidus A."/>
            <person name="Chu L."/>
            <person name="Mazur M."/>
            <person name="Goltsman E."/>
            <person name="Larsen N."/>
            <person name="D'Souza M."/>
            <person name="Walunas T."/>
            <person name="Grechkin Y."/>
            <person name="Pusch G."/>
            <person name="Haselkorn R."/>
            <person name="Fonstein M."/>
            <person name="Ehrlich S.D."/>
            <person name="Overbeek R."/>
            <person name="Kyrpides N.C."/>
        </authorList>
    </citation>
    <scope>NUCLEOTIDE SEQUENCE [LARGE SCALE GENOMIC DNA]</scope>
    <source>
        <strain>ATCC 14579 / DSM 31 / CCUG 7414 / JCM 2152 / NBRC 15305 / NCIMB 9373 / NCTC 2599 / NRRL B-3711</strain>
    </source>
</reference>
<name>MURD_BACCR</name>
<keyword id="KW-0067">ATP-binding</keyword>
<keyword id="KW-0131">Cell cycle</keyword>
<keyword id="KW-0132">Cell division</keyword>
<keyword id="KW-0133">Cell shape</keyword>
<keyword id="KW-0961">Cell wall biogenesis/degradation</keyword>
<keyword id="KW-0963">Cytoplasm</keyword>
<keyword id="KW-0436">Ligase</keyword>
<keyword id="KW-0547">Nucleotide-binding</keyword>
<keyword id="KW-0573">Peptidoglycan synthesis</keyword>
<keyword id="KW-1185">Reference proteome</keyword>
<feature type="chain" id="PRO_0000108961" description="UDP-N-acetylmuramoylalanine--D-glutamate ligase">
    <location>
        <begin position="1"/>
        <end position="450"/>
    </location>
</feature>
<feature type="binding site" evidence="1">
    <location>
        <begin position="119"/>
        <end position="125"/>
    </location>
    <ligand>
        <name>ATP</name>
        <dbReference type="ChEBI" id="CHEBI:30616"/>
    </ligand>
</feature>
<sequence>MKTVTEFQNKNILVLGIAKSGYAAATLLQKLGANVIVNDGKPLAENVLAAELQAKGMDVVCGGHPLELLERNISLVVKNPGIPYSNPILVAAKEKQIPIVTEVELAYRISEAPFVGITGSNGKTTTTMLTFEMLKEGQKHPVIAGNIGTVACEVAQDAKENEVVVTELSSFQLMGVELFQPKIAAFLNLFEAHLDYHGTKKEYGLAKANIFKNQTENDYSVINADDADVMALSAYSKGQKILFSTTKEIEDGACIKDNALYFKGEKVIEVSDIVLPGQHNLENILAAMSIAKLLGTSNEAITVVLKRFTGVKHRLEYVTTINNRKFYNDSKATNMLATEKALSAFTQPIVLLAGGLDRGNEFDDLIPYFKNVKAIVTFGQTAPKLVRAAEKAGLDIIESVDTLDEAVVKAYAHSKDGDVVLLSPACASWDQFKTFEERGDIFIQAVHKLI</sequence>
<dbReference type="EC" id="6.3.2.9" evidence="1"/>
<dbReference type="EMBL" id="AE016877">
    <property type="protein sequence ID" value="AAP10833.1"/>
    <property type="molecule type" value="Genomic_DNA"/>
</dbReference>
<dbReference type="RefSeq" id="NP_833632.1">
    <property type="nucleotide sequence ID" value="NC_004722.1"/>
</dbReference>
<dbReference type="RefSeq" id="WP_000860115.1">
    <property type="nucleotide sequence ID" value="NZ_CP138336.1"/>
</dbReference>
<dbReference type="SMR" id="Q819Q2"/>
<dbReference type="STRING" id="226900.BC_3912"/>
<dbReference type="KEGG" id="bce:BC3912"/>
<dbReference type="PATRIC" id="fig|226900.8.peg.4034"/>
<dbReference type="HOGENOM" id="CLU_032540_0_1_9"/>
<dbReference type="OrthoDB" id="9809796at2"/>
<dbReference type="UniPathway" id="UPA00219"/>
<dbReference type="Proteomes" id="UP000001417">
    <property type="component" value="Chromosome"/>
</dbReference>
<dbReference type="GO" id="GO:0005737">
    <property type="term" value="C:cytoplasm"/>
    <property type="evidence" value="ECO:0007669"/>
    <property type="project" value="UniProtKB-SubCell"/>
</dbReference>
<dbReference type="GO" id="GO:0005524">
    <property type="term" value="F:ATP binding"/>
    <property type="evidence" value="ECO:0007669"/>
    <property type="project" value="UniProtKB-UniRule"/>
</dbReference>
<dbReference type="GO" id="GO:0008764">
    <property type="term" value="F:UDP-N-acetylmuramoylalanine-D-glutamate ligase activity"/>
    <property type="evidence" value="ECO:0007669"/>
    <property type="project" value="UniProtKB-UniRule"/>
</dbReference>
<dbReference type="GO" id="GO:0051301">
    <property type="term" value="P:cell division"/>
    <property type="evidence" value="ECO:0007669"/>
    <property type="project" value="UniProtKB-KW"/>
</dbReference>
<dbReference type="GO" id="GO:0071555">
    <property type="term" value="P:cell wall organization"/>
    <property type="evidence" value="ECO:0007669"/>
    <property type="project" value="UniProtKB-KW"/>
</dbReference>
<dbReference type="GO" id="GO:0009252">
    <property type="term" value="P:peptidoglycan biosynthetic process"/>
    <property type="evidence" value="ECO:0007669"/>
    <property type="project" value="UniProtKB-UniRule"/>
</dbReference>
<dbReference type="GO" id="GO:0008360">
    <property type="term" value="P:regulation of cell shape"/>
    <property type="evidence" value="ECO:0007669"/>
    <property type="project" value="UniProtKB-KW"/>
</dbReference>
<dbReference type="Gene3D" id="3.90.190.20">
    <property type="entry name" value="Mur ligase, C-terminal domain"/>
    <property type="match status" value="1"/>
</dbReference>
<dbReference type="Gene3D" id="3.40.1190.10">
    <property type="entry name" value="Mur-like, catalytic domain"/>
    <property type="match status" value="1"/>
</dbReference>
<dbReference type="Gene3D" id="3.40.50.720">
    <property type="entry name" value="NAD(P)-binding Rossmann-like Domain"/>
    <property type="match status" value="1"/>
</dbReference>
<dbReference type="HAMAP" id="MF_00639">
    <property type="entry name" value="MurD"/>
    <property type="match status" value="1"/>
</dbReference>
<dbReference type="InterPro" id="IPR036565">
    <property type="entry name" value="Mur-like_cat_sf"/>
</dbReference>
<dbReference type="InterPro" id="IPR004101">
    <property type="entry name" value="Mur_ligase_C"/>
</dbReference>
<dbReference type="InterPro" id="IPR036615">
    <property type="entry name" value="Mur_ligase_C_dom_sf"/>
</dbReference>
<dbReference type="InterPro" id="IPR013221">
    <property type="entry name" value="Mur_ligase_cen"/>
</dbReference>
<dbReference type="InterPro" id="IPR005762">
    <property type="entry name" value="MurD"/>
</dbReference>
<dbReference type="NCBIfam" id="TIGR01087">
    <property type="entry name" value="murD"/>
    <property type="match status" value="1"/>
</dbReference>
<dbReference type="PANTHER" id="PTHR43692">
    <property type="entry name" value="UDP-N-ACETYLMURAMOYLALANINE--D-GLUTAMATE LIGASE"/>
    <property type="match status" value="1"/>
</dbReference>
<dbReference type="PANTHER" id="PTHR43692:SF1">
    <property type="entry name" value="UDP-N-ACETYLMURAMOYLALANINE--D-GLUTAMATE LIGASE"/>
    <property type="match status" value="1"/>
</dbReference>
<dbReference type="Pfam" id="PF02875">
    <property type="entry name" value="Mur_ligase_C"/>
    <property type="match status" value="1"/>
</dbReference>
<dbReference type="Pfam" id="PF08245">
    <property type="entry name" value="Mur_ligase_M"/>
    <property type="match status" value="1"/>
</dbReference>
<dbReference type="Pfam" id="PF21799">
    <property type="entry name" value="MurD-like_N"/>
    <property type="match status" value="1"/>
</dbReference>
<dbReference type="SUPFAM" id="SSF51984">
    <property type="entry name" value="MurCD N-terminal domain"/>
    <property type="match status" value="1"/>
</dbReference>
<dbReference type="SUPFAM" id="SSF53623">
    <property type="entry name" value="MurD-like peptide ligases, catalytic domain"/>
    <property type="match status" value="1"/>
</dbReference>
<dbReference type="SUPFAM" id="SSF53244">
    <property type="entry name" value="MurD-like peptide ligases, peptide-binding domain"/>
    <property type="match status" value="1"/>
</dbReference>
<protein>
    <recommendedName>
        <fullName evidence="1">UDP-N-acetylmuramoylalanine--D-glutamate ligase</fullName>
        <ecNumber evidence="1">6.3.2.9</ecNumber>
    </recommendedName>
    <alternativeName>
        <fullName evidence="1">D-glutamic acid-adding enzyme</fullName>
    </alternativeName>
    <alternativeName>
        <fullName evidence="1">UDP-N-acetylmuramoyl-L-alanyl-D-glutamate synthetase</fullName>
    </alternativeName>
</protein>